<dbReference type="EC" id="1.17.1.8" evidence="1"/>
<dbReference type="EMBL" id="AY596297">
    <property type="protein sequence ID" value="AAV45267.1"/>
    <property type="molecule type" value="Genomic_DNA"/>
</dbReference>
<dbReference type="RefSeq" id="WP_007188322.1">
    <property type="nucleotide sequence ID" value="NZ_CP039138.1"/>
</dbReference>
<dbReference type="SMR" id="Q5V5D5"/>
<dbReference type="STRING" id="272569.rrnAC0206"/>
<dbReference type="PaxDb" id="272569-rrnAC0206"/>
<dbReference type="EnsemblBacteria" id="AAV45267">
    <property type="protein sequence ID" value="AAV45267"/>
    <property type="gene ID" value="rrnAC0206"/>
</dbReference>
<dbReference type="GeneID" id="40154503"/>
<dbReference type="KEGG" id="hma:rrnAC0206"/>
<dbReference type="PATRIC" id="fig|272569.17.peg.999"/>
<dbReference type="eggNOG" id="arCOG04393">
    <property type="taxonomic scope" value="Archaea"/>
</dbReference>
<dbReference type="HOGENOM" id="CLU_047479_2_2_2"/>
<dbReference type="UniPathway" id="UPA00034">
    <property type="reaction ID" value="UER00018"/>
</dbReference>
<dbReference type="Proteomes" id="UP000001169">
    <property type="component" value="Chromosome I"/>
</dbReference>
<dbReference type="GO" id="GO:0005829">
    <property type="term" value="C:cytosol"/>
    <property type="evidence" value="ECO:0007669"/>
    <property type="project" value="TreeGrafter"/>
</dbReference>
<dbReference type="GO" id="GO:0008839">
    <property type="term" value="F:4-hydroxy-tetrahydrodipicolinate reductase"/>
    <property type="evidence" value="ECO:0007669"/>
    <property type="project" value="UniProtKB-EC"/>
</dbReference>
<dbReference type="GO" id="GO:0051287">
    <property type="term" value="F:NAD binding"/>
    <property type="evidence" value="ECO:0007669"/>
    <property type="project" value="UniProtKB-UniRule"/>
</dbReference>
<dbReference type="GO" id="GO:0050661">
    <property type="term" value="F:NADP binding"/>
    <property type="evidence" value="ECO:0007669"/>
    <property type="project" value="UniProtKB-UniRule"/>
</dbReference>
<dbReference type="GO" id="GO:0016726">
    <property type="term" value="F:oxidoreductase activity, acting on CH or CH2 groups, NAD or NADP as acceptor"/>
    <property type="evidence" value="ECO:0007669"/>
    <property type="project" value="UniProtKB-UniRule"/>
</dbReference>
<dbReference type="GO" id="GO:0019877">
    <property type="term" value="P:diaminopimelate biosynthetic process"/>
    <property type="evidence" value="ECO:0007669"/>
    <property type="project" value="UniProtKB-UniRule"/>
</dbReference>
<dbReference type="GO" id="GO:0009089">
    <property type="term" value="P:lysine biosynthetic process via diaminopimelate"/>
    <property type="evidence" value="ECO:0007669"/>
    <property type="project" value="UniProtKB-UniRule"/>
</dbReference>
<dbReference type="CDD" id="cd02274">
    <property type="entry name" value="DHDPR_N"/>
    <property type="match status" value="1"/>
</dbReference>
<dbReference type="Gene3D" id="3.30.360.10">
    <property type="entry name" value="Dihydrodipicolinate Reductase, domain 2"/>
    <property type="match status" value="1"/>
</dbReference>
<dbReference type="Gene3D" id="3.40.50.720">
    <property type="entry name" value="NAD(P)-binding Rossmann-like Domain"/>
    <property type="match status" value="1"/>
</dbReference>
<dbReference type="HAMAP" id="MF_00102">
    <property type="entry name" value="DapB"/>
    <property type="match status" value="1"/>
</dbReference>
<dbReference type="InterPro" id="IPR022663">
    <property type="entry name" value="DapB_C"/>
</dbReference>
<dbReference type="InterPro" id="IPR000846">
    <property type="entry name" value="DapB_N"/>
</dbReference>
<dbReference type="InterPro" id="IPR022664">
    <property type="entry name" value="DapB_N_CS"/>
</dbReference>
<dbReference type="InterPro" id="IPR023940">
    <property type="entry name" value="DHDPR_bac"/>
</dbReference>
<dbReference type="InterPro" id="IPR036291">
    <property type="entry name" value="NAD(P)-bd_dom_sf"/>
</dbReference>
<dbReference type="NCBIfam" id="TIGR00036">
    <property type="entry name" value="dapB"/>
    <property type="match status" value="1"/>
</dbReference>
<dbReference type="PANTHER" id="PTHR20836:SF0">
    <property type="entry name" value="4-HYDROXY-TETRAHYDRODIPICOLINATE REDUCTASE 1, CHLOROPLASTIC-RELATED"/>
    <property type="match status" value="1"/>
</dbReference>
<dbReference type="PANTHER" id="PTHR20836">
    <property type="entry name" value="DIHYDRODIPICOLINATE REDUCTASE"/>
    <property type="match status" value="1"/>
</dbReference>
<dbReference type="Pfam" id="PF05173">
    <property type="entry name" value="DapB_C"/>
    <property type="match status" value="1"/>
</dbReference>
<dbReference type="Pfam" id="PF01113">
    <property type="entry name" value="DapB_N"/>
    <property type="match status" value="1"/>
</dbReference>
<dbReference type="PIRSF" id="PIRSF000161">
    <property type="entry name" value="DHPR"/>
    <property type="match status" value="1"/>
</dbReference>
<dbReference type="SUPFAM" id="SSF55347">
    <property type="entry name" value="Glyceraldehyde-3-phosphate dehydrogenase-like, C-terminal domain"/>
    <property type="match status" value="1"/>
</dbReference>
<dbReference type="SUPFAM" id="SSF51735">
    <property type="entry name" value="NAD(P)-binding Rossmann-fold domains"/>
    <property type="match status" value="1"/>
</dbReference>
<dbReference type="PROSITE" id="PS01298">
    <property type="entry name" value="DAPB"/>
    <property type="match status" value="1"/>
</dbReference>
<organism>
    <name type="scientific">Haloarcula marismortui (strain ATCC 43049 / DSM 3752 / JCM 8966 / VKM B-1809)</name>
    <name type="common">Halobacterium marismortui</name>
    <dbReference type="NCBI Taxonomy" id="272569"/>
    <lineage>
        <taxon>Archaea</taxon>
        <taxon>Methanobacteriati</taxon>
        <taxon>Methanobacteriota</taxon>
        <taxon>Stenosarchaea group</taxon>
        <taxon>Halobacteria</taxon>
        <taxon>Halobacteriales</taxon>
        <taxon>Haloarculaceae</taxon>
        <taxon>Haloarcula</taxon>
    </lineage>
</organism>
<name>DAPB_HALMA</name>
<evidence type="ECO:0000255" key="1">
    <source>
        <dbReference type="HAMAP-Rule" id="MF_00102"/>
    </source>
</evidence>
<evidence type="ECO:0000305" key="2"/>
<keyword id="KW-0028">Amino-acid biosynthesis</keyword>
<keyword id="KW-0963">Cytoplasm</keyword>
<keyword id="KW-0220">Diaminopimelate biosynthesis</keyword>
<keyword id="KW-0457">Lysine biosynthesis</keyword>
<keyword id="KW-0520">NAD</keyword>
<keyword id="KW-0521">NADP</keyword>
<keyword id="KW-0560">Oxidoreductase</keyword>
<keyword id="KW-1185">Reference proteome</keyword>
<gene>
    <name evidence="1" type="primary">dapB</name>
    <name type="ordered locus">rrnAC0206</name>
</gene>
<reference key="1">
    <citation type="journal article" date="2004" name="Genome Res.">
        <title>Genome sequence of Haloarcula marismortui: a halophilic archaeon from the Dead Sea.</title>
        <authorList>
            <person name="Baliga N.S."/>
            <person name="Bonneau R."/>
            <person name="Facciotti M.T."/>
            <person name="Pan M."/>
            <person name="Glusman G."/>
            <person name="Deutsch E.W."/>
            <person name="Shannon P."/>
            <person name="Chiu Y."/>
            <person name="Weng R.S."/>
            <person name="Gan R.R."/>
            <person name="Hung P."/>
            <person name="Date S.V."/>
            <person name="Marcotte E."/>
            <person name="Hood L."/>
            <person name="Ng W.V."/>
        </authorList>
    </citation>
    <scope>NUCLEOTIDE SEQUENCE [LARGE SCALE GENOMIC DNA]</scope>
    <source>
        <strain>ATCC 43049 / DSM 3752 / JCM 8966 / VKM B-1809</strain>
    </source>
</reference>
<feature type="chain" id="PRO_0000141516" description="4-hydroxy-tetrahydrodipicolinate reductase">
    <location>
        <begin position="1"/>
        <end position="249"/>
    </location>
</feature>
<feature type="active site" description="Proton donor/acceptor" evidence="1">
    <location>
        <position position="143"/>
    </location>
</feature>
<feature type="active site" description="Proton donor" evidence="1">
    <location>
        <position position="147"/>
    </location>
</feature>
<feature type="binding site" evidence="1">
    <location>
        <begin position="8"/>
        <end position="13"/>
    </location>
    <ligand>
        <name>NAD(+)</name>
        <dbReference type="ChEBI" id="CHEBI:57540"/>
    </ligand>
</feature>
<feature type="binding site" evidence="1">
    <location>
        <begin position="87"/>
        <end position="89"/>
    </location>
    <ligand>
        <name>NAD(+)</name>
        <dbReference type="ChEBI" id="CHEBI:57540"/>
    </ligand>
</feature>
<feature type="binding site" evidence="1">
    <location>
        <begin position="111"/>
        <end position="114"/>
    </location>
    <ligand>
        <name>NAD(+)</name>
        <dbReference type="ChEBI" id="CHEBI:57540"/>
    </ligand>
</feature>
<feature type="binding site" evidence="1">
    <location>
        <position position="144"/>
    </location>
    <ligand>
        <name>(S)-2,3,4,5-tetrahydrodipicolinate</name>
        <dbReference type="ChEBI" id="CHEBI:16845"/>
    </ligand>
</feature>
<feature type="binding site" evidence="1">
    <location>
        <begin position="153"/>
        <end position="154"/>
    </location>
    <ligand>
        <name>(S)-2,3,4,5-tetrahydrodipicolinate</name>
        <dbReference type="ChEBI" id="CHEBI:16845"/>
    </ligand>
</feature>
<accession>Q5V5D5</accession>
<comment type="function">
    <text evidence="1">Catalyzes the conversion of 4-hydroxy-tetrahydrodipicolinate (HTPA) to tetrahydrodipicolinate.</text>
</comment>
<comment type="catalytic activity">
    <reaction evidence="1">
        <text>(S)-2,3,4,5-tetrahydrodipicolinate + NAD(+) + H2O = (2S,4S)-4-hydroxy-2,3,4,5-tetrahydrodipicolinate + NADH + H(+)</text>
        <dbReference type="Rhea" id="RHEA:35323"/>
        <dbReference type="ChEBI" id="CHEBI:15377"/>
        <dbReference type="ChEBI" id="CHEBI:15378"/>
        <dbReference type="ChEBI" id="CHEBI:16845"/>
        <dbReference type="ChEBI" id="CHEBI:57540"/>
        <dbReference type="ChEBI" id="CHEBI:57945"/>
        <dbReference type="ChEBI" id="CHEBI:67139"/>
        <dbReference type="EC" id="1.17.1.8"/>
    </reaction>
</comment>
<comment type="catalytic activity">
    <reaction evidence="1">
        <text>(S)-2,3,4,5-tetrahydrodipicolinate + NADP(+) + H2O = (2S,4S)-4-hydroxy-2,3,4,5-tetrahydrodipicolinate + NADPH + H(+)</text>
        <dbReference type="Rhea" id="RHEA:35331"/>
        <dbReference type="ChEBI" id="CHEBI:15377"/>
        <dbReference type="ChEBI" id="CHEBI:15378"/>
        <dbReference type="ChEBI" id="CHEBI:16845"/>
        <dbReference type="ChEBI" id="CHEBI:57783"/>
        <dbReference type="ChEBI" id="CHEBI:58349"/>
        <dbReference type="ChEBI" id="CHEBI:67139"/>
        <dbReference type="EC" id="1.17.1.8"/>
    </reaction>
</comment>
<comment type="pathway">
    <text evidence="1">Amino-acid biosynthesis; L-lysine biosynthesis via DAP pathway; (S)-tetrahydrodipicolinate from L-aspartate: step 4/4.</text>
</comment>
<comment type="subcellular location">
    <subcellularLocation>
        <location evidence="1">Cytoplasm</location>
    </subcellularLocation>
</comment>
<comment type="similarity">
    <text evidence="1">Belongs to the DapB family.</text>
</comment>
<comment type="caution">
    <text evidence="2">Was originally thought to be a dihydrodipicolinate reductase (DHDPR), catalyzing the conversion of dihydrodipicolinate to tetrahydrodipicolinate. However, it was shown in E.coli that the substrate of the enzymatic reaction is not dihydrodipicolinate (DHDP) but in fact (2S,4S)-4-hydroxy-2,3,4,5-tetrahydrodipicolinic acid (HTPA), the product released by the DapA-catalyzed reaction.</text>
</comment>
<protein>
    <recommendedName>
        <fullName evidence="1">4-hydroxy-tetrahydrodipicolinate reductase</fullName>
        <shortName evidence="1">HTPA reductase</shortName>
        <ecNumber evidence="1">1.17.1.8</ecNumber>
    </recommendedName>
</protein>
<proteinExistence type="inferred from homology"/>
<sequence length="249" mass="26345">MTRVAVNGVTGQMGGAVIEAATDSEVVVGFATSDTDAVDDVPVVHPAEAAAALREYDVDVVVDFAVPKGALTVAEACVEAGVPMVVGTTGFDEDGLARLQDASEEIPLLKATNFSQGIQVLQRLISEAVGTLDDYDLELMETHHNRKVDAPSGTASSILDVIQEERDVEPVYGREGHAPREDDEIGVFARRAGDVRGEHELVLAGNDEVLSLSHRAEDRGVFAAGALDAATWLVGRDSGWYEFGDVVDA</sequence>